<proteinExistence type="inferred from homology"/>
<comment type="function">
    <text evidence="1">Component of the acetyl coenzyme A carboxylase (ACC) complex. First, biotin carboxylase catalyzes the carboxylation of biotin on its carrier protein (BCCP) and then the CO(2) group is transferred by the carboxyltransferase to acetyl-CoA to form malonyl-CoA.</text>
</comment>
<comment type="catalytic activity">
    <reaction evidence="1">
        <text>N(6)-carboxybiotinyl-L-lysyl-[protein] + acetyl-CoA = N(6)-biotinyl-L-lysyl-[protein] + malonyl-CoA</text>
        <dbReference type="Rhea" id="RHEA:54728"/>
        <dbReference type="Rhea" id="RHEA-COMP:10505"/>
        <dbReference type="Rhea" id="RHEA-COMP:10506"/>
        <dbReference type="ChEBI" id="CHEBI:57288"/>
        <dbReference type="ChEBI" id="CHEBI:57384"/>
        <dbReference type="ChEBI" id="CHEBI:83144"/>
        <dbReference type="ChEBI" id="CHEBI:83145"/>
        <dbReference type="EC" id="2.1.3.15"/>
    </reaction>
</comment>
<comment type="pathway">
    <text evidence="1">Lipid metabolism; malonyl-CoA biosynthesis; malonyl-CoA from acetyl-CoA: step 1/1.</text>
</comment>
<comment type="subunit">
    <text evidence="1">Acetyl-CoA carboxylase is a heterohexamer composed of biotin carboxyl carrier protein (AccB), biotin carboxylase (AccC) and two subunits each of ACCase subunit alpha (AccA) and ACCase subunit beta (AccD).</text>
</comment>
<comment type="subcellular location">
    <subcellularLocation>
        <location evidence="1">Cytoplasm</location>
    </subcellularLocation>
</comment>
<comment type="similarity">
    <text evidence="1">Belongs to the AccA family.</text>
</comment>
<keyword id="KW-0067">ATP-binding</keyword>
<keyword id="KW-0963">Cytoplasm</keyword>
<keyword id="KW-0275">Fatty acid biosynthesis</keyword>
<keyword id="KW-0276">Fatty acid metabolism</keyword>
<keyword id="KW-0444">Lipid biosynthesis</keyword>
<keyword id="KW-0443">Lipid metabolism</keyword>
<keyword id="KW-0547">Nucleotide-binding</keyword>
<keyword id="KW-1185">Reference proteome</keyword>
<keyword id="KW-0808">Transferase</keyword>
<evidence type="ECO:0000255" key="1">
    <source>
        <dbReference type="HAMAP-Rule" id="MF_00823"/>
    </source>
</evidence>
<evidence type="ECO:0000255" key="2">
    <source>
        <dbReference type="PROSITE-ProRule" id="PRU01137"/>
    </source>
</evidence>
<protein>
    <recommendedName>
        <fullName evidence="1">Acetyl-coenzyme A carboxylase carboxyl transferase subunit alpha</fullName>
        <shortName evidence="1">ACCase subunit alpha</shortName>
        <shortName evidence="1">Acetyl-CoA carboxylase carboxyltransferase subunit alpha</shortName>
        <ecNumber evidence="1">2.1.3.15</ecNumber>
    </recommendedName>
</protein>
<sequence length="322" mass="35939">MNLDYLDFEQPIAELEEKIQTLDNIKGKANIKDKADIINKIKALKSKSNALTKKIFSSLSDWQISQLARHPKRLYTLDYISDVFDEFTELHGDRTYGDDHAIIGGIATLDNQPVMFIGQQKGRTTQEKIKYNFGMPRPEGYRKALRLMKLAEKFSMPIVTFIDTPGAYPGIGAEERGQSEAIAKNLFEMSTLPTPIISIVIGEGGSGGALAIGVADIIMMFEYSIYSVISPEGCASILYKDVTKANLAAESLKLTSIHLKKERLIDVVINEPLGGIHRNPSQAKVLLKEVLTQQLNKIKQLPIEQLLQNRQKKLLGFGKFKD</sequence>
<feature type="chain" id="PRO_1000062696" description="Acetyl-coenzyme A carboxylase carboxyl transferase subunit alpha">
    <location>
        <begin position="1"/>
        <end position="322"/>
    </location>
</feature>
<feature type="domain" description="CoA carboxyltransferase C-terminal" evidence="2">
    <location>
        <begin position="43"/>
        <end position="297"/>
    </location>
</feature>
<organism>
    <name type="scientific">Vesicomyosocius okutanii subsp. Calyptogena okutanii (strain HA)</name>
    <dbReference type="NCBI Taxonomy" id="412965"/>
    <lineage>
        <taxon>Bacteria</taxon>
        <taxon>Pseudomonadati</taxon>
        <taxon>Pseudomonadota</taxon>
        <taxon>Gammaproteobacteria</taxon>
        <taxon>Candidatus Pseudothioglobaceae</taxon>
        <taxon>Candidatus Vesicomyosocius</taxon>
    </lineage>
</organism>
<name>ACCA_VESOH</name>
<reference key="1">
    <citation type="journal article" date="2007" name="Curr. Biol.">
        <title>Reduced genome of the thioautotrophic intracellular symbiont in a deep-sea clam, Calyptogena okutanii.</title>
        <authorList>
            <person name="Kuwahara H."/>
            <person name="Yoshida T."/>
            <person name="Takaki Y."/>
            <person name="Shimamura S."/>
            <person name="Nishi S."/>
            <person name="Harada M."/>
            <person name="Matsuyama K."/>
            <person name="Takishita K."/>
            <person name="Kawato M."/>
            <person name="Uematsu K."/>
            <person name="Fujiwara Y."/>
            <person name="Sato T."/>
            <person name="Kato C."/>
            <person name="Kitagawa M."/>
            <person name="Kato I."/>
            <person name="Maruyama T."/>
        </authorList>
    </citation>
    <scope>NUCLEOTIDE SEQUENCE [LARGE SCALE GENOMIC DNA]</scope>
    <source>
        <strain>HA</strain>
    </source>
</reference>
<accession>A5CXS3</accession>
<dbReference type="EC" id="2.1.3.15" evidence="1"/>
<dbReference type="EMBL" id="AP009247">
    <property type="protein sequence ID" value="BAF61261.1"/>
    <property type="molecule type" value="Genomic_DNA"/>
</dbReference>
<dbReference type="RefSeq" id="WP_011929531.1">
    <property type="nucleotide sequence ID" value="NC_009465.1"/>
</dbReference>
<dbReference type="SMR" id="A5CXS3"/>
<dbReference type="STRING" id="412965.COSY_0127"/>
<dbReference type="KEGG" id="vok:COSY_0127"/>
<dbReference type="eggNOG" id="COG0825">
    <property type="taxonomic scope" value="Bacteria"/>
</dbReference>
<dbReference type="HOGENOM" id="CLU_015486_0_2_6"/>
<dbReference type="OrthoDB" id="9808023at2"/>
<dbReference type="UniPathway" id="UPA00655">
    <property type="reaction ID" value="UER00711"/>
</dbReference>
<dbReference type="Proteomes" id="UP000000247">
    <property type="component" value="Chromosome"/>
</dbReference>
<dbReference type="GO" id="GO:0009317">
    <property type="term" value="C:acetyl-CoA carboxylase complex"/>
    <property type="evidence" value="ECO:0007669"/>
    <property type="project" value="InterPro"/>
</dbReference>
<dbReference type="GO" id="GO:0003989">
    <property type="term" value="F:acetyl-CoA carboxylase activity"/>
    <property type="evidence" value="ECO:0007669"/>
    <property type="project" value="InterPro"/>
</dbReference>
<dbReference type="GO" id="GO:0005524">
    <property type="term" value="F:ATP binding"/>
    <property type="evidence" value="ECO:0007669"/>
    <property type="project" value="UniProtKB-KW"/>
</dbReference>
<dbReference type="GO" id="GO:0016743">
    <property type="term" value="F:carboxyl- or carbamoyltransferase activity"/>
    <property type="evidence" value="ECO:0007669"/>
    <property type="project" value="UniProtKB-UniRule"/>
</dbReference>
<dbReference type="GO" id="GO:0006633">
    <property type="term" value="P:fatty acid biosynthetic process"/>
    <property type="evidence" value="ECO:0007669"/>
    <property type="project" value="UniProtKB-KW"/>
</dbReference>
<dbReference type="GO" id="GO:2001295">
    <property type="term" value="P:malonyl-CoA biosynthetic process"/>
    <property type="evidence" value="ECO:0007669"/>
    <property type="project" value="UniProtKB-UniRule"/>
</dbReference>
<dbReference type="Gene3D" id="3.90.226.10">
    <property type="entry name" value="2-enoyl-CoA Hydratase, Chain A, domain 1"/>
    <property type="match status" value="1"/>
</dbReference>
<dbReference type="HAMAP" id="MF_00823">
    <property type="entry name" value="AcetylCoA_CT_alpha"/>
    <property type="match status" value="1"/>
</dbReference>
<dbReference type="InterPro" id="IPR001095">
    <property type="entry name" value="Acetyl_CoA_COase_a_su"/>
</dbReference>
<dbReference type="InterPro" id="IPR029045">
    <property type="entry name" value="ClpP/crotonase-like_dom_sf"/>
</dbReference>
<dbReference type="InterPro" id="IPR011763">
    <property type="entry name" value="COA_CT_C"/>
</dbReference>
<dbReference type="NCBIfam" id="TIGR00513">
    <property type="entry name" value="accA"/>
    <property type="match status" value="1"/>
</dbReference>
<dbReference type="NCBIfam" id="NF041504">
    <property type="entry name" value="AccA_sub"/>
    <property type="match status" value="1"/>
</dbReference>
<dbReference type="NCBIfam" id="NF004344">
    <property type="entry name" value="PRK05724.1"/>
    <property type="match status" value="1"/>
</dbReference>
<dbReference type="PANTHER" id="PTHR42853">
    <property type="entry name" value="ACETYL-COENZYME A CARBOXYLASE CARBOXYL TRANSFERASE SUBUNIT ALPHA"/>
    <property type="match status" value="1"/>
</dbReference>
<dbReference type="PANTHER" id="PTHR42853:SF3">
    <property type="entry name" value="ACETYL-COENZYME A CARBOXYLASE CARBOXYL TRANSFERASE SUBUNIT ALPHA, CHLOROPLASTIC"/>
    <property type="match status" value="1"/>
</dbReference>
<dbReference type="Pfam" id="PF03255">
    <property type="entry name" value="ACCA"/>
    <property type="match status" value="1"/>
</dbReference>
<dbReference type="PRINTS" id="PR01069">
    <property type="entry name" value="ACCCTRFRASEA"/>
</dbReference>
<dbReference type="SUPFAM" id="SSF52096">
    <property type="entry name" value="ClpP/crotonase"/>
    <property type="match status" value="1"/>
</dbReference>
<dbReference type="PROSITE" id="PS50989">
    <property type="entry name" value="COA_CT_CTER"/>
    <property type="match status" value="1"/>
</dbReference>
<gene>
    <name evidence="1" type="primary">accA</name>
    <name type="ordered locus">COSY_0127</name>
</gene>